<sequence>MKTPIELKILDSRIGSEFPLPAYATPGSAGMDLRAMLDTNLTIAPGETVLIPTGIAVHVADPSLAAVILPRSGMGHKHGIVLGNLVGLIDSDYQGPLMVSCWNRGNEPYTLQIGDRLAQLVFVPVVQAEFKLVDEFDTSMRGEGGFGHSGTR</sequence>
<proteinExistence type="inferred from homology"/>
<protein>
    <recommendedName>
        <fullName evidence="1">Deoxyuridine 5'-triphosphate nucleotidohydrolase</fullName>
        <shortName evidence="1">dUTPase</shortName>
        <ecNumber evidence="1">3.6.1.23</ecNumber>
    </recommendedName>
    <alternativeName>
        <fullName evidence="1">dUTP pyrophosphatase</fullName>
    </alternativeName>
</protein>
<evidence type="ECO:0000255" key="1">
    <source>
        <dbReference type="HAMAP-Rule" id="MF_00116"/>
    </source>
</evidence>
<keyword id="KW-0378">Hydrolase</keyword>
<keyword id="KW-0460">Magnesium</keyword>
<keyword id="KW-0479">Metal-binding</keyword>
<keyword id="KW-0546">Nucleotide metabolism</keyword>
<keyword id="KW-1185">Reference proteome</keyword>
<feature type="chain" id="PRO_1000015511" description="Deoxyuridine 5'-triphosphate nucleotidohydrolase">
    <location>
        <begin position="1"/>
        <end position="152"/>
    </location>
</feature>
<feature type="binding site" evidence="1">
    <location>
        <begin position="71"/>
        <end position="73"/>
    </location>
    <ligand>
        <name>substrate</name>
    </ligand>
</feature>
<feature type="binding site" evidence="1">
    <location>
        <position position="84"/>
    </location>
    <ligand>
        <name>substrate</name>
    </ligand>
</feature>
<feature type="binding site" evidence="1">
    <location>
        <begin position="88"/>
        <end position="90"/>
    </location>
    <ligand>
        <name>substrate</name>
    </ligand>
</feature>
<feature type="binding site" evidence="1">
    <location>
        <position position="98"/>
    </location>
    <ligand>
        <name>substrate</name>
    </ligand>
</feature>
<organism>
    <name type="scientific">Shewanella amazonensis (strain ATCC BAA-1098 / SB2B)</name>
    <dbReference type="NCBI Taxonomy" id="326297"/>
    <lineage>
        <taxon>Bacteria</taxon>
        <taxon>Pseudomonadati</taxon>
        <taxon>Pseudomonadota</taxon>
        <taxon>Gammaproteobacteria</taxon>
        <taxon>Alteromonadales</taxon>
        <taxon>Shewanellaceae</taxon>
        <taxon>Shewanella</taxon>
    </lineage>
</organism>
<reference key="1">
    <citation type="submission" date="2006-12" db="EMBL/GenBank/DDBJ databases">
        <title>Complete sequence of Shewanella amazonensis SB2B.</title>
        <authorList>
            <consortium name="US DOE Joint Genome Institute"/>
            <person name="Copeland A."/>
            <person name="Lucas S."/>
            <person name="Lapidus A."/>
            <person name="Barry K."/>
            <person name="Detter J.C."/>
            <person name="Glavina del Rio T."/>
            <person name="Hammon N."/>
            <person name="Israni S."/>
            <person name="Dalin E."/>
            <person name="Tice H."/>
            <person name="Pitluck S."/>
            <person name="Munk A.C."/>
            <person name="Brettin T."/>
            <person name="Bruce D."/>
            <person name="Han C."/>
            <person name="Tapia R."/>
            <person name="Gilna P."/>
            <person name="Schmutz J."/>
            <person name="Larimer F."/>
            <person name="Land M."/>
            <person name="Hauser L."/>
            <person name="Kyrpides N."/>
            <person name="Mikhailova N."/>
            <person name="Fredrickson J."/>
            <person name="Richardson P."/>
        </authorList>
    </citation>
    <scope>NUCLEOTIDE SEQUENCE [LARGE SCALE GENOMIC DNA]</scope>
    <source>
        <strain>ATCC BAA-1098 / SB2B</strain>
    </source>
</reference>
<gene>
    <name evidence="1" type="primary">dut</name>
    <name type="ordered locus">Sama_0325</name>
</gene>
<name>DUT_SHEAM</name>
<dbReference type="EC" id="3.6.1.23" evidence="1"/>
<dbReference type="EMBL" id="CP000507">
    <property type="protein sequence ID" value="ABL98536.1"/>
    <property type="molecule type" value="Genomic_DNA"/>
</dbReference>
<dbReference type="RefSeq" id="WP_011758446.1">
    <property type="nucleotide sequence ID" value="NC_008700.1"/>
</dbReference>
<dbReference type="SMR" id="A1S2D0"/>
<dbReference type="STRING" id="326297.Sama_0325"/>
<dbReference type="KEGG" id="saz:Sama_0325"/>
<dbReference type="eggNOG" id="COG0756">
    <property type="taxonomic scope" value="Bacteria"/>
</dbReference>
<dbReference type="HOGENOM" id="CLU_068508_1_1_6"/>
<dbReference type="OrthoDB" id="9809956at2"/>
<dbReference type="UniPathway" id="UPA00610">
    <property type="reaction ID" value="UER00666"/>
</dbReference>
<dbReference type="Proteomes" id="UP000009175">
    <property type="component" value="Chromosome"/>
</dbReference>
<dbReference type="GO" id="GO:0004170">
    <property type="term" value="F:dUTP diphosphatase activity"/>
    <property type="evidence" value="ECO:0007669"/>
    <property type="project" value="UniProtKB-UniRule"/>
</dbReference>
<dbReference type="GO" id="GO:0000287">
    <property type="term" value="F:magnesium ion binding"/>
    <property type="evidence" value="ECO:0007669"/>
    <property type="project" value="UniProtKB-UniRule"/>
</dbReference>
<dbReference type="GO" id="GO:0006226">
    <property type="term" value="P:dUMP biosynthetic process"/>
    <property type="evidence" value="ECO:0007669"/>
    <property type="project" value="UniProtKB-UniRule"/>
</dbReference>
<dbReference type="GO" id="GO:0046081">
    <property type="term" value="P:dUTP catabolic process"/>
    <property type="evidence" value="ECO:0007669"/>
    <property type="project" value="InterPro"/>
</dbReference>
<dbReference type="CDD" id="cd07557">
    <property type="entry name" value="trimeric_dUTPase"/>
    <property type="match status" value="1"/>
</dbReference>
<dbReference type="FunFam" id="2.70.40.10:FF:000002">
    <property type="entry name" value="dUTP diphosphatase"/>
    <property type="match status" value="1"/>
</dbReference>
<dbReference type="Gene3D" id="2.70.40.10">
    <property type="match status" value="1"/>
</dbReference>
<dbReference type="HAMAP" id="MF_00116">
    <property type="entry name" value="dUTPase_bact"/>
    <property type="match status" value="1"/>
</dbReference>
<dbReference type="InterPro" id="IPR008181">
    <property type="entry name" value="dUTPase"/>
</dbReference>
<dbReference type="InterPro" id="IPR029054">
    <property type="entry name" value="dUTPase-like"/>
</dbReference>
<dbReference type="InterPro" id="IPR036157">
    <property type="entry name" value="dUTPase-like_sf"/>
</dbReference>
<dbReference type="InterPro" id="IPR033704">
    <property type="entry name" value="dUTPase_trimeric"/>
</dbReference>
<dbReference type="NCBIfam" id="TIGR00576">
    <property type="entry name" value="dut"/>
    <property type="match status" value="1"/>
</dbReference>
<dbReference type="NCBIfam" id="NF001862">
    <property type="entry name" value="PRK00601.1"/>
    <property type="match status" value="1"/>
</dbReference>
<dbReference type="PANTHER" id="PTHR11241">
    <property type="entry name" value="DEOXYURIDINE 5'-TRIPHOSPHATE NUCLEOTIDOHYDROLASE"/>
    <property type="match status" value="1"/>
</dbReference>
<dbReference type="PANTHER" id="PTHR11241:SF0">
    <property type="entry name" value="DEOXYURIDINE 5'-TRIPHOSPHATE NUCLEOTIDOHYDROLASE"/>
    <property type="match status" value="1"/>
</dbReference>
<dbReference type="Pfam" id="PF00692">
    <property type="entry name" value="dUTPase"/>
    <property type="match status" value="1"/>
</dbReference>
<dbReference type="SUPFAM" id="SSF51283">
    <property type="entry name" value="dUTPase-like"/>
    <property type="match status" value="1"/>
</dbReference>
<accession>A1S2D0</accession>
<comment type="function">
    <text evidence="1">This enzyme is involved in nucleotide metabolism: it produces dUMP, the immediate precursor of thymidine nucleotides and it decreases the intracellular concentration of dUTP so that uracil cannot be incorporated into DNA.</text>
</comment>
<comment type="catalytic activity">
    <reaction evidence="1">
        <text>dUTP + H2O = dUMP + diphosphate + H(+)</text>
        <dbReference type="Rhea" id="RHEA:10248"/>
        <dbReference type="ChEBI" id="CHEBI:15377"/>
        <dbReference type="ChEBI" id="CHEBI:15378"/>
        <dbReference type="ChEBI" id="CHEBI:33019"/>
        <dbReference type="ChEBI" id="CHEBI:61555"/>
        <dbReference type="ChEBI" id="CHEBI:246422"/>
        <dbReference type="EC" id="3.6.1.23"/>
    </reaction>
</comment>
<comment type="cofactor">
    <cofactor evidence="1">
        <name>Mg(2+)</name>
        <dbReference type="ChEBI" id="CHEBI:18420"/>
    </cofactor>
</comment>
<comment type="pathway">
    <text evidence="1">Pyrimidine metabolism; dUMP biosynthesis; dUMP from dCTP (dUTP route): step 2/2.</text>
</comment>
<comment type="similarity">
    <text evidence="1">Belongs to the dUTPase family.</text>
</comment>